<reference key="1">
    <citation type="journal article" date="2001" name="J. Bacteriol.">
        <title>Genome of the bacterium Streptococcus pneumoniae strain R6.</title>
        <authorList>
            <person name="Hoskins J."/>
            <person name="Alborn W.E. Jr."/>
            <person name="Arnold J."/>
            <person name="Blaszczak L.C."/>
            <person name="Burgett S."/>
            <person name="DeHoff B.S."/>
            <person name="Estrem S.T."/>
            <person name="Fritz L."/>
            <person name="Fu D.-J."/>
            <person name="Fuller W."/>
            <person name="Geringer C."/>
            <person name="Gilmour R."/>
            <person name="Glass J.S."/>
            <person name="Khoja H."/>
            <person name="Kraft A.R."/>
            <person name="Lagace R.E."/>
            <person name="LeBlanc D.J."/>
            <person name="Lee L.N."/>
            <person name="Lefkowitz E.J."/>
            <person name="Lu J."/>
            <person name="Matsushima P."/>
            <person name="McAhren S.M."/>
            <person name="McHenney M."/>
            <person name="McLeaster K."/>
            <person name="Mundy C.W."/>
            <person name="Nicas T.I."/>
            <person name="Norris F.H."/>
            <person name="O'Gara M."/>
            <person name="Peery R.B."/>
            <person name="Robertson G.T."/>
            <person name="Rockey P."/>
            <person name="Sun P.-M."/>
            <person name="Winkler M.E."/>
            <person name="Yang Y."/>
            <person name="Young-Bellido M."/>
            <person name="Zhao G."/>
            <person name="Zook C.A."/>
            <person name="Baltz R.H."/>
            <person name="Jaskunas S.R."/>
            <person name="Rosteck P.R. Jr."/>
            <person name="Skatrud P.L."/>
            <person name="Glass J.I."/>
        </authorList>
    </citation>
    <scope>NUCLEOTIDE SEQUENCE [LARGE SCALE GENOMIC DNA]</scope>
    <source>
        <strain>ATCC BAA-255 / R6</strain>
    </source>
</reference>
<evidence type="ECO:0000255" key="1">
    <source>
        <dbReference type="HAMAP-Rule" id="MF_00818"/>
    </source>
</evidence>
<evidence type="ECO:0000305" key="2"/>
<organism>
    <name type="scientific">Streptococcus pneumoniae (strain ATCC BAA-255 / R6)</name>
    <dbReference type="NCBI Taxonomy" id="171101"/>
    <lineage>
        <taxon>Bacteria</taxon>
        <taxon>Bacillati</taxon>
        <taxon>Bacillota</taxon>
        <taxon>Bacilli</taxon>
        <taxon>Lactobacillales</taxon>
        <taxon>Streptococcaceae</taxon>
        <taxon>Streptococcus</taxon>
    </lineage>
</organism>
<dbReference type="EC" id="1.7.1.13" evidence="1"/>
<dbReference type="EMBL" id="AE007317">
    <property type="protein sequence ID" value="AAL00406.1"/>
    <property type="status" value="ALT_INIT"/>
    <property type="molecule type" value="Genomic_DNA"/>
</dbReference>
<dbReference type="PIR" id="A98072">
    <property type="entry name" value="A98072"/>
</dbReference>
<dbReference type="RefSeq" id="NP_359195.1">
    <property type="nucleotide sequence ID" value="NC_003098.1"/>
</dbReference>
<dbReference type="SMR" id="Q8DNP8"/>
<dbReference type="STRING" id="171101.spr1603"/>
<dbReference type="KEGG" id="spr:spr1603"/>
<dbReference type="PATRIC" id="fig|171101.6.peg.1730"/>
<dbReference type="eggNOG" id="COG0780">
    <property type="taxonomic scope" value="Bacteria"/>
</dbReference>
<dbReference type="HOGENOM" id="CLU_1517100_0_0_9"/>
<dbReference type="UniPathway" id="UPA00392"/>
<dbReference type="Proteomes" id="UP000000586">
    <property type="component" value="Chromosome"/>
</dbReference>
<dbReference type="GO" id="GO:0005829">
    <property type="term" value="C:cytosol"/>
    <property type="evidence" value="ECO:0000318"/>
    <property type="project" value="GO_Central"/>
</dbReference>
<dbReference type="GO" id="GO:0033739">
    <property type="term" value="F:preQ1 synthase activity"/>
    <property type="evidence" value="ECO:0000318"/>
    <property type="project" value="GO_Central"/>
</dbReference>
<dbReference type="GO" id="GO:0008616">
    <property type="term" value="P:queuosine biosynthetic process"/>
    <property type="evidence" value="ECO:0000318"/>
    <property type="project" value="GO_Central"/>
</dbReference>
<dbReference type="GO" id="GO:0006400">
    <property type="term" value="P:tRNA modification"/>
    <property type="evidence" value="ECO:0007669"/>
    <property type="project" value="UniProtKB-UniRule"/>
</dbReference>
<dbReference type="Gene3D" id="3.30.1130.10">
    <property type="match status" value="1"/>
</dbReference>
<dbReference type="HAMAP" id="MF_00818">
    <property type="entry name" value="QueF_type1"/>
    <property type="match status" value="1"/>
</dbReference>
<dbReference type="InterPro" id="IPR043133">
    <property type="entry name" value="GTP-CH-I_C/QueF"/>
</dbReference>
<dbReference type="InterPro" id="IPR050084">
    <property type="entry name" value="NADPH_dep_7-cyano-7-deazaG_red"/>
</dbReference>
<dbReference type="InterPro" id="IPR018317">
    <property type="entry name" value="QueC"/>
</dbReference>
<dbReference type="InterPro" id="IPR029500">
    <property type="entry name" value="QueF"/>
</dbReference>
<dbReference type="InterPro" id="IPR016856">
    <property type="entry name" value="QueF_type1"/>
</dbReference>
<dbReference type="NCBIfam" id="TIGR03139">
    <property type="entry name" value="QueF-II"/>
    <property type="match status" value="1"/>
</dbReference>
<dbReference type="PANTHER" id="PTHR34354">
    <property type="entry name" value="NADPH-DEPENDENT 7-CYANO-7-DEAZAGUANINE REDUCTASE"/>
    <property type="match status" value="1"/>
</dbReference>
<dbReference type="PANTHER" id="PTHR34354:SF1">
    <property type="entry name" value="NADPH-DEPENDENT 7-CYANO-7-DEAZAGUANINE REDUCTASE"/>
    <property type="match status" value="1"/>
</dbReference>
<dbReference type="Pfam" id="PF06508">
    <property type="entry name" value="QueC"/>
    <property type="match status" value="1"/>
</dbReference>
<dbReference type="Pfam" id="PF14489">
    <property type="entry name" value="QueF"/>
    <property type="match status" value="1"/>
</dbReference>
<dbReference type="SUPFAM" id="SSF52402">
    <property type="entry name" value="Adenine nucleotide alpha hydrolases-like"/>
    <property type="match status" value="1"/>
</dbReference>
<dbReference type="SUPFAM" id="SSF55620">
    <property type="entry name" value="Tetrahydrobiopterin biosynthesis enzymes-like"/>
    <property type="match status" value="1"/>
</dbReference>
<feature type="chain" id="PRO_0000163006" description="Putative NADPH-dependent 7-cyano-7-deazaguanine reductase">
    <location>
        <begin position="1"/>
        <end position="154"/>
    </location>
</feature>
<feature type="active site" description="Proton donor" evidence="1">
    <location>
        <position position="52"/>
    </location>
</feature>
<feature type="binding site" evidence="1">
    <location>
        <begin position="67"/>
        <end position="69"/>
    </location>
    <ligand>
        <name>substrate</name>
    </ligand>
</feature>
<feature type="binding site" evidence="1">
    <location>
        <begin position="86"/>
        <end position="87"/>
    </location>
    <ligand>
        <name>substrate</name>
    </ligand>
</feature>
<gene>
    <name evidence="1" type="primary">queF</name>
    <name type="ordered locus">spr1603</name>
</gene>
<name>QUEF_STRR6</name>
<sequence>MQHYETVEAVTFAYGQHHHLEIQITREIAKEQGIRHHILDMSLLGQITAQPDFATIHISYIPDKLCVESKSLKLYLFSYRNHGDFHENCINTIGKDLVNLLDPRYLEVWGKFTPRGGISIDPYYNYGKQGTKYEGLAEQRLFQHDLYPEKIDNR</sequence>
<comment type="function">
    <text evidence="1">Catalyzes the NADPH-dependent reduction of 7-cyano-7-deazaguanine (preQ0) to 7-aminomethyl-7-deazaguanine (preQ1).</text>
</comment>
<comment type="catalytic activity">
    <reaction evidence="1">
        <text>7-aminomethyl-7-carbaguanine + 2 NADP(+) = 7-cyano-7-deazaguanine + 2 NADPH + 3 H(+)</text>
        <dbReference type="Rhea" id="RHEA:13409"/>
        <dbReference type="ChEBI" id="CHEBI:15378"/>
        <dbReference type="ChEBI" id="CHEBI:45075"/>
        <dbReference type="ChEBI" id="CHEBI:57783"/>
        <dbReference type="ChEBI" id="CHEBI:58349"/>
        <dbReference type="ChEBI" id="CHEBI:58703"/>
        <dbReference type="EC" id="1.7.1.13"/>
    </reaction>
</comment>
<comment type="pathway">
    <text evidence="1">tRNA modification; tRNA-queuosine biosynthesis.</text>
</comment>
<comment type="subcellular location">
    <subcellularLocation>
        <location evidence="1">Cytoplasm</location>
    </subcellularLocation>
</comment>
<comment type="similarity">
    <text evidence="1">Belongs to the GTP cyclohydrolase I family. QueF type 1 subfamily.</text>
</comment>
<comment type="caution">
    <text evidence="2">Lacks the conserved cysteine residue that is involved in the formation of the covalent thioimide linkage with the substrate; it is replaced by a glycine residue (Gly-45). The enzyme may thus be inactive.</text>
</comment>
<comment type="sequence caution" evidence="2">
    <conflict type="erroneous initiation">
        <sequence resource="EMBL-CDS" id="AAL00406"/>
    </conflict>
</comment>
<accession>Q8DNP8</accession>
<protein>
    <recommendedName>
        <fullName>Putative NADPH-dependent 7-cyano-7-deazaguanine reductase</fullName>
        <ecNumber evidence="1">1.7.1.13</ecNumber>
    </recommendedName>
    <alternativeName>
        <fullName evidence="1">7-cyano-7-carbaguanine reductase</fullName>
    </alternativeName>
    <alternativeName>
        <fullName evidence="1">NADPH-dependent nitrile oxidoreductase</fullName>
    </alternativeName>
    <alternativeName>
        <fullName evidence="1">PreQ(0) reductase</fullName>
    </alternativeName>
</protein>
<keyword id="KW-0963">Cytoplasm</keyword>
<keyword id="KW-0521">NADP</keyword>
<keyword id="KW-0560">Oxidoreductase</keyword>
<keyword id="KW-0671">Queuosine biosynthesis</keyword>
<keyword id="KW-1185">Reference proteome</keyword>
<proteinExistence type="inferred from homology"/>